<feature type="chain" id="PRO_1000070994" description="Acetate kinase">
    <location>
        <begin position="1"/>
        <end position="395"/>
    </location>
</feature>
<feature type="active site" description="Proton donor/acceptor" evidence="1">
    <location>
        <position position="145"/>
    </location>
</feature>
<feature type="binding site" evidence="1">
    <location>
        <position position="7"/>
    </location>
    <ligand>
        <name>Mg(2+)</name>
        <dbReference type="ChEBI" id="CHEBI:18420"/>
    </ligand>
</feature>
<feature type="binding site" evidence="1">
    <location>
        <position position="14"/>
    </location>
    <ligand>
        <name>ATP</name>
        <dbReference type="ChEBI" id="CHEBI:30616"/>
    </ligand>
</feature>
<feature type="binding site" evidence="1">
    <location>
        <position position="88"/>
    </location>
    <ligand>
        <name>substrate</name>
    </ligand>
</feature>
<feature type="binding site" evidence="1">
    <location>
        <begin position="205"/>
        <end position="209"/>
    </location>
    <ligand>
        <name>ATP</name>
        <dbReference type="ChEBI" id="CHEBI:30616"/>
    </ligand>
</feature>
<feature type="binding site" evidence="1">
    <location>
        <begin position="279"/>
        <end position="281"/>
    </location>
    <ligand>
        <name>ATP</name>
        <dbReference type="ChEBI" id="CHEBI:30616"/>
    </ligand>
</feature>
<feature type="binding site" evidence="1">
    <location>
        <begin position="327"/>
        <end position="331"/>
    </location>
    <ligand>
        <name>ATP</name>
        <dbReference type="ChEBI" id="CHEBI:30616"/>
    </ligand>
</feature>
<feature type="binding site" evidence="1">
    <location>
        <position position="381"/>
    </location>
    <ligand>
        <name>Mg(2+)</name>
        <dbReference type="ChEBI" id="CHEBI:18420"/>
    </ligand>
</feature>
<feature type="site" description="Transition state stabilizer" evidence="1">
    <location>
        <position position="177"/>
    </location>
</feature>
<feature type="site" description="Transition state stabilizer" evidence="1">
    <location>
        <position position="238"/>
    </location>
</feature>
<gene>
    <name evidence="1" type="primary">ackA</name>
    <name type="ordered locus">C8J_0657</name>
</gene>
<reference key="1">
    <citation type="journal article" date="2007" name="J. Bacteriol.">
        <title>The complete genome sequence of Campylobacter jejuni strain 81116 (NCTC11828).</title>
        <authorList>
            <person name="Pearson B.M."/>
            <person name="Gaskin D.J.H."/>
            <person name="Segers R.P.A.M."/>
            <person name="Wells J.M."/>
            <person name="Nuijten P.J.M."/>
            <person name="van Vliet A.H.M."/>
        </authorList>
    </citation>
    <scope>NUCLEOTIDE SEQUENCE [LARGE SCALE GENOMIC DNA]</scope>
    <source>
        <strain>81116 / NCTC 11828</strain>
    </source>
</reference>
<protein>
    <recommendedName>
        <fullName evidence="1">Acetate kinase</fullName>
        <ecNumber evidence="1">2.7.2.1</ecNumber>
    </recommendedName>
    <alternativeName>
        <fullName evidence="1">Acetokinase</fullName>
    </alternativeName>
</protein>
<comment type="function">
    <text evidence="1">Catalyzes the formation of acetyl phosphate from acetate and ATP. Can also catalyze the reverse reaction.</text>
</comment>
<comment type="catalytic activity">
    <reaction evidence="1">
        <text>acetate + ATP = acetyl phosphate + ADP</text>
        <dbReference type="Rhea" id="RHEA:11352"/>
        <dbReference type="ChEBI" id="CHEBI:22191"/>
        <dbReference type="ChEBI" id="CHEBI:30089"/>
        <dbReference type="ChEBI" id="CHEBI:30616"/>
        <dbReference type="ChEBI" id="CHEBI:456216"/>
        <dbReference type="EC" id="2.7.2.1"/>
    </reaction>
</comment>
<comment type="cofactor">
    <cofactor evidence="1">
        <name>Mg(2+)</name>
        <dbReference type="ChEBI" id="CHEBI:18420"/>
    </cofactor>
    <cofactor evidence="1">
        <name>Mn(2+)</name>
        <dbReference type="ChEBI" id="CHEBI:29035"/>
    </cofactor>
    <text evidence="1">Mg(2+). Can also accept Mn(2+).</text>
</comment>
<comment type="pathway">
    <text evidence="1">Metabolic intermediate biosynthesis; acetyl-CoA biosynthesis; acetyl-CoA from acetate: step 1/2.</text>
</comment>
<comment type="subunit">
    <text evidence="1">Homodimer.</text>
</comment>
<comment type="subcellular location">
    <subcellularLocation>
        <location evidence="1">Cytoplasm</location>
    </subcellularLocation>
</comment>
<comment type="similarity">
    <text evidence="1">Belongs to the acetokinase family.</text>
</comment>
<name>ACKA_CAMJ8</name>
<accession>A8FLB9</accession>
<keyword id="KW-0067">ATP-binding</keyword>
<keyword id="KW-0963">Cytoplasm</keyword>
<keyword id="KW-0418">Kinase</keyword>
<keyword id="KW-0460">Magnesium</keyword>
<keyword id="KW-0479">Metal-binding</keyword>
<keyword id="KW-0547">Nucleotide-binding</keyword>
<keyword id="KW-0808">Transferase</keyword>
<evidence type="ECO:0000255" key="1">
    <source>
        <dbReference type="HAMAP-Rule" id="MF_00020"/>
    </source>
</evidence>
<sequence length="395" mass="43912">MKILVLNSGSSSIKFKFFDNKVVKASGLVEKIGEQNSKVILKNVLNNESFERELMINNHEEGLSIVNELFKESGILADLNALDGCGHRIVHGGRNLSEHCLVDDYVLKEIDRVSIFAPLHNPAHLAGIKTMIKAAPSVANVAIFDTAFHRTMPDFAYMYALPYDFYDKHNIRRYGFHGTSHAFVSSRAASLLEKDKSELNVISAHLGNGASVCAIEKGKSVDTSMGFTPLEGLVMGTRCGDLDPAILPFISHLKGLTIEEIDTLMNKKSGVYGICGYNDFRDIEREIEQGNDKARLALDMFCYRLVKYIGSYFAVLPKTDAIIFTGGIGENDSLVRQKVCERLAHLGIELDFELNKQRISGERMINHANSKVKVLVIPTDEELEIARITEELISN</sequence>
<organism>
    <name type="scientific">Campylobacter jejuni subsp. jejuni serotype O:6 (strain 81116 / NCTC 11828)</name>
    <dbReference type="NCBI Taxonomy" id="407148"/>
    <lineage>
        <taxon>Bacteria</taxon>
        <taxon>Pseudomonadati</taxon>
        <taxon>Campylobacterota</taxon>
        <taxon>Epsilonproteobacteria</taxon>
        <taxon>Campylobacterales</taxon>
        <taxon>Campylobacteraceae</taxon>
        <taxon>Campylobacter</taxon>
    </lineage>
</organism>
<dbReference type="EC" id="2.7.2.1" evidence="1"/>
<dbReference type="EMBL" id="CP000814">
    <property type="protein sequence ID" value="ABV52256.1"/>
    <property type="molecule type" value="Genomic_DNA"/>
</dbReference>
<dbReference type="RefSeq" id="WP_002876956.1">
    <property type="nucleotide sequence ID" value="NC_009839.1"/>
</dbReference>
<dbReference type="SMR" id="A8FLB9"/>
<dbReference type="KEGG" id="cju:C8J_0657"/>
<dbReference type="HOGENOM" id="CLU_020352_0_1_7"/>
<dbReference type="UniPathway" id="UPA00340">
    <property type="reaction ID" value="UER00458"/>
</dbReference>
<dbReference type="GO" id="GO:0005737">
    <property type="term" value="C:cytoplasm"/>
    <property type="evidence" value="ECO:0007669"/>
    <property type="project" value="UniProtKB-SubCell"/>
</dbReference>
<dbReference type="GO" id="GO:0008776">
    <property type="term" value="F:acetate kinase activity"/>
    <property type="evidence" value="ECO:0007669"/>
    <property type="project" value="UniProtKB-UniRule"/>
</dbReference>
<dbReference type="GO" id="GO:0005524">
    <property type="term" value="F:ATP binding"/>
    <property type="evidence" value="ECO:0007669"/>
    <property type="project" value="UniProtKB-KW"/>
</dbReference>
<dbReference type="GO" id="GO:0000287">
    <property type="term" value="F:magnesium ion binding"/>
    <property type="evidence" value="ECO:0007669"/>
    <property type="project" value="UniProtKB-UniRule"/>
</dbReference>
<dbReference type="GO" id="GO:0006083">
    <property type="term" value="P:acetate metabolic process"/>
    <property type="evidence" value="ECO:0007669"/>
    <property type="project" value="TreeGrafter"/>
</dbReference>
<dbReference type="GO" id="GO:0006085">
    <property type="term" value="P:acetyl-CoA biosynthetic process"/>
    <property type="evidence" value="ECO:0007669"/>
    <property type="project" value="UniProtKB-UniRule"/>
</dbReference>
<dbReference type="CDD" id="cd24010">
    <property type="entry name" value="ASKHA_NBD_AcK_PK"/>
    <property type="match status" value="1"/>
</dbReference>
<dbReference type="Gene3D" id="3.30.420.40">
    <property type="match status" value="2"/>
</dbReference>
<dbReference type="HAMAP" id="MF_00020">
    <property type="entry name" value="Acetate_kinase"/>
    <property type="match status" value="1"/>
</dbReference>
<dbReference type="InterPro" id="IPR004372">
    <property type="entry name" value="Ac/propionate_kinase"/>
</dbReference>
<dbReference type="InterPro" id="IPR000890">
    <property type="entry name" value="Aliphatic_acid_kin_short-chain"/>
</dbReference>
<dbReference type="InterPro" id="IPR023865">
    <property type="entry name" value="Aliphatic_acid_kinase_CS"/>
</dbReference>
<dbReference type="InterPro" id="IPR043129">
    <property type="entry name" value="ATPase_NBD"/>
</dbReference>
<dbReference type="NCBIfam" id="TIGR00016">
    <property type="entry name" value="ackA"/>
    <property type="match status" value="1"/>
</dbReference>
<dbReference type="PANTHER" id="PTHR21060">
    <property type="entry name" value="ACETATE KINASE"/>
    <property type="match status" value="1"/>
</dbReference>
<dbReference type="PANTHER" id="PTHR21060:SF15">
    <property type="entry name" value="ACETATE KINASE-RELATED"/>
    <property type="match status" value="1"/>
</dbReference>
<dbReference type="Pfam" id="PF00871">
    <property type="entry name" value="Acetate_kinase"/>
    <property type="match status" value="1"/>
</dbReference>
<dbReference type="PIRSF" id="PIRSF000722">
    <property type="entry name" value="Acetate_prop_kin"/>
    <property type="match status" value="1"/>
</dbReference>
<dbReference type="PRINTS" id="PR00471">
    <property type="entry name" value="ACETATEKNASE"/>
</dbReference>
<dbReference type="SUPFAM" id="SSF53067">
    <property type="entry name" value="Actin-like ATPase domain"/>
    <property type="match status" value="2"/>
</dbReference>
<dbReference type="PROSITE" id="PS01075">
    <property type="entry name" value="ACETATE_KINASE_1"/>
    <property type="match status" value="1"/>
</dbReference>
<dbReference type="PROSITE" id="PS01076">
    <property type="entry name" value="ACETATE_KINASE_2"/>
    <property type="match status" value="1"/>
</dbReference>
<proteinExistence type="inferred from homology"/>